<name>CINA_CLOB8</name>
<proteinExistence type="inferred from homology"/>
<reference key="1">
    <citation type="submission" date="2007-06" db="EMBL/GenBank/DDBJ databases">
        <title>Complete sequence of Clostridium beijerinckii NCIMB 8052.</title>
        <authorList>
            <consortium name="US DOE Joint Genome Institute"/>
            <person name="Copeland A."/>
            <person name="Lucas S."/>
            <person name="Lapidus A."/>
            <person name="Barry K."/>
            <person name="Detter J.C."/>
            <person name="Glavina del Rio T."/>
            <person name="Hammon N."/>
            <person name="Israni S."/>
            <person name="Dalin E."/>
            <person name="Tice H."/>
            <person name="Pitluck S."/>
            <person name="Sims D."/>
            <person name="Brettin T."/>
            <person name="Bruce D."/>
            <person name="Tapia R."/>
            <person name="Brainard J."/>
            <person name="Schmutz J."/>
            <person name="Larimer F."/>
            <person name="Land M."/>
            <person name="Hauser L."/>
            <person name="Kyrpides N."/>
            <person name="Mikhailova N."/>
            <person name="Bennet G."/>
            <person name="Cann I."/>
            <person name="Chen J.-S."/>
            <person name="Contreras A.L."/>
            <person name="Jones D."/>
            <person name="Kashket E."/>
            <person name="Mitchell W."/>
            <person name="Stoddard S."/>
            <person name="Schwarz W."/>
            <person name="Qureshi N."/>
            <person name="Young M."/>
            <person name="Shi Z."/>
            <person name="Ezeji T."/>
            <person name="White B."/>
            <person name="Blaschek H."/>
            <person name="Richardson P."/>
        </authorList>
    </citation>
    <scope>NUCLEOTIDE SEQUENCE [LARGE SCALE GENOMIC DNA]</scope>
    <source>
        <strain>ATCC 51743 / NCIMB 8052</strain>
    </source>
</reference>
<gene>
    <name evidence="1" type="primary">cinA</name>
    <name type="ordered locus">Cbei_4894</name>
</gene>
<evidence type="ECO:0000255" key="1">
    <source>
        <dbReference type="HAMAP-Rule" id="MF_00226"/>
    </source>
</evidence>
<accession>A6M320</accession>
<feature type="chain" id="PRO_1000078173" description="Putative competence-damage inducible protein">
    <location>
        <begin position="1"/>
        <end position="410"/>
    </location>
</feature>
<sequence length="410" mass="45014">MKAEIIAIGTEILLGDIINSNAQYLAQELAALGIDMYYQQVVGDNEIRIMHAFDEAYSRSDIIITTGGLGPTDDDITKEVAAKYFNKELIQDENSIKKIKDYFKFRERVMTKNNLKQGLIPEGATVIKNNNGTAPGVIIEDDNKIMIILPGPPKEMKPMFEESVKPYLQEKSDSILVSRVVKILGIGESAVAEEIKDLIDAQTNPTIAPYAKDVGVMLRITAKAETKDEALKLIEPIEEEIKNRLGDNVYATEDINIEEVVARLLIEKKLTISTAESCTGGMIASYLINYPGISEVFLEGAVTYSNEAKHNRLGVNNDILNKYGAVSEETAREMAIGIAKTANTDVSIVTTGIAGPEGGTLEKPVGLVFIGVYVQGKVTIQKCLFKGDRNKVRLQATITGLDMLRRILIK</sequence>
<organism>
    <name type="scientific">Clostridium beijerinckii (strain ATCC 51743 / NCIMB 8052)</name>
    <name type="common">Clostridium acetobutylicum</name>
    <dbReference type="NCBI Taxonomy" id="290402"/>
    <lineage>
        <taxon>Bacteria</taxon>
        <taxon>Bacillati</taxon>
        <taxon>Bacillota</taxon>
        <taxon>Clostridia</taxon>
        <taxon>Eubacteriales</taxon>
        <taxon>Clostridiaceae</taxon>
        <taxon>Clostridium</taxon>
    </lineage>
</organism>
<comment type="similarity">
    <text evidence="1">Belongs to the CinA family.</text>
</comment>
<protein>
    <recommendedName>
        <fullName evidence="1">Putative competence-damage inducible protein</fullName>
    </recommendedName>
</protein>
<dbReference type="EMBL" id="CP000721">
    <property type="protein sequence ID" value="ABR37000.1"/>
    <property type="molecule type" value="Genomic_DNA"/>
</dbReference>
<dbReference type="RefSeq" id="WP_012061044.1">
    <property type="nucleotide sequence ID" value="NC_009617.1"/>
</dbReference>
<dbReference type="SMR" id="A6M320"/>
<dbReference type="KEGG" id="cbe:Cbei_4894"/>
<dbReference type="eggNOG" id="COG1058">
    <property type="taxonomic scope" value="Bacteria"/>
</dbReference>
<dbReference type="eggNOG" id="COG1546">
    <property type="taxonomic scope" value="Bacteria"/>
</dbReference>
<dbReference type="HOGENOM" id="CLU_030805_9_3_9"/>
<dbReference type="Proteomes" id="UP000000565">
    <property type="component" value="Chromosome"/>
</dbReference>
<dbReference type="CDD" id="cd00885">
    <property type="entry name" value="cinA"/>
    <property type="match status" value="1"/>
</dbReference>
<dbReference type="Gene3D" id="3.30.70.2860">
    <property type="match status" value="1"/>
</dbReference>
<dbReference type="Gene3D" id="3.90.950.20">
    <property type="entry name" value="CinA-like"/>
    <property type="match status" value="1"/>
</dbReference>
<dbReference type="Gene3D" id="3.40.980.10">
    <property type="entry name" value="MoaB/Mog-like domain"/>
    <property type="match status" value="1"/>
</dbReference>
<dbReference type="HAMAP" id="MF_00226_B">
    <property type="entry name" value="CinA_B"/>
    <property type="match status" value="1"/>
</dbReference>
<dbReference type="InterPro" id="IPR050101">
    <property type="entry name" value="CinA"/>
</dbReference>
<dbReference type="InterPro" id="IPR036653">
    <property type="entry name" value="CinA-like_C"/>
</dbReference>
<dbReference type="InterPro" id="IPR008136">
    <property type="entry name" value="CinA_C"/>
</dbReference>
<dbReference type="InterPro" id="IPR041424">
    <property type="entry name" value="CinA_KH"/>
</dbReference>
<dbReference type="InterPro" id="IPR008135">
    <property type="entry name" value="Competence-induced_CinA"/>
</dbReference>
<dbReference type="InterPro" id="IPR036425">
    <property type="entry name" value="MoaB/Mog-like_dom_sf"/>
</dbReference>
<dbReference type="InterPro" id="IPR001453">
    <property type="entry name" value="MoaB/Mog_dom"/>
</dbReference>
<dbReference type="NCBIfam" id="TIGR00200">
    <property type="entry name" value="cinA_nterm"/>
    <property type="match status" value="1"/>
</dbReference>
<dbReference type="NCBIfam" id="TIGR00177">
    <property type="entry name" value="molyb_syn"/>
    <property type="match status" value="1"/>
</dbReference>
<dbReference type="NCBIfam" id="TIGR00199">
    <property type="entry name" value="PncC_domain"/>
    <property type="match status" value="1"/>
</dbReference>
<dbReference type="NCBIfam" id="NF001813">
    <property type="entry name" value="PRK00549.1"/>
    <property type="match status" value="1"/>
</dbReference>
<dbReference type="PANTHER" id="PTHR13939">
    <property type="entry name" value="NICOTINAMIDE-NUCLEOTIDE AMIDOHYDROLASE PNCC"/>
    <property type="match status" value="1"/>
</dbReference>
<dbReference type="PANTHER" id="PTHR13939:SF0">
    <property type="entry name" value="NMN AMIDOHYDROLASE-LIKE PROTEIN YFAY"/>
    <property type="match status" value="1"/>
</dbReference>
<dbReference type="Pfam" id="PF02464">
    <property type="entry name" value="CinA"/>
    <property type="match status" value="1"/>
</dbReference>
<dbReference type="Pfam" id="PF18146">
    <property type="entry name" value="CinA_KH"/>
    <property type="match status" value="1"/>
</dbReference>
<dbReference type="Pfam" id="PF00994">
    <property type="entry name" value="MoCF_biosynth"/>
    <property type="match status" value="1"/>
</dbReference>
<dbReference type="PIRSF" id="PIRSF006728">
    <property type="entry name" value="CinA"/>
    <property type="match status" value="1"/>
</dbReference>
<dbReference type="SMART" id="SM00852">
    <property type="entry name" value="MoCF_biosynth"/>
    <property type="match status" value="1"/>
</dbReference>
<dbReference type="SUPFAM" id="SSF142433">
    <property type="entry name" value="CinA-like"/>
    <property type="match status" value="1"/>
</dbReference>
<dbReference type="SUPFAM" id="SSF53218">
    <property type="entry name" value="Molybdenum cofactor biosynthesis proteins"/>
    <property type="match status" value="1"/>
</dbReference>